<keyword id="KW-0028">Amino-acid biosynthesis</keyword>
<keyword id="KW-0100">Branched-chain amino acid biosynthesis</keyword>
<keyword id="KW-0963">Cytoplasm</keyword>
<keyword id="KW-0432">Leucine biosynthesis</keyword>
<keyword id="KW-0460">Magnesium</keyword>
<keyword id="KW-0464">Manganese</keyword>
<keyword id="KW-0479">Metal-binding</keyword>
<keyword id="KW-0520">NAD</keyword>
<keyword id="KW-0560">Oxidoreductase</keyword>
<feature type="chain" id="PRO_0000083634" description="3-isopropylmalate dehydrogenase">
    <location>
        <begin position="1"/>
        <end position="354"/>
    </location>
</feature>
<feature type="binding site" evidence="1">
    <location>
        <begin position="76"/>
        <end position="87"/>
    </location>
    <ligand>
        <name>NAD(+)</name>
        <dbReference type="ChEBI" id="CHEBI:57540"/>
    </ligand>
</feature>
<feature type="binding site" evidence="1">
    <location>
        <position position="94"/>
    </location>
    <ligand>
        <name>substrate</name>
    </ligand>
</feature>
<feature type="binding site" evidence="1">
    <location>
        <position position="104"/>
    </location>
    <ligand>
        <name>substrate</name>
    </ligand>
</feature>
<feature type="binding site" evidence="1">
    <location>
        <position position="130"/>
    </location>
    <ligand>
        <name>substrate</name>
    </ligand>
</feature>
<feature type="binding site" evidence="1">
    <location>
        <position position="215"/>
    </location>
    <ligand>
        <name>Mg(2+)</name>
        <dbReference type="ChEBI" id="CHEBI:18420"/>
    </ligand>
</feature>
<feature type="binding site" evidence="1">
    <location>
        <position position="215"/>
    </location>
    <ligand>
        <name>substrate</name>
    </ligand>
</feature>
<feature type="binding site" evidence="1">
    <location>
        <position position="239"/>
    </location>
    <ligand>
        <name>Mg(2+)</name>
        <dbReference type="ChEBI" id="CHEBI:18420"/>
    </ligand>
</feature>
<feature type="binding site" evidence="1">
    <location>
        <position position="243"/>
    </location>
    <ligand>
        <name>Mg(2+)</name>
        <dbReference type="ChEBI" id="CHEBI:18420"/>
    </ligand>
</feature>
<feature type="binding site" evidence="1">
    <location>
        <begin position="273"/>
        <end position="285"/>
    </location>
    <ligand>
        <name>NAD(+)</name>
        <dbReference type="ChEBI" id="CHEBI:57540"/>
    </ligand>
</feature>
<feature type="site" description="Important for catalysis" evidence="1">
    <location>
        <position position="137"/>
    </location>
</feature>
<feature type="site" description="Important for catalysis" evidence="1">
    <location>
        <position position="183"/>
    </location>
</feature>
<comment type="function">
    <text evidence="1">Catalyzes the oxidation of 3-carboxy-2-hydroxy-4-methylpentanoate (3-isopropylmalate) to 3-carboxy-4-methyl-2-oxopentanoate. The product decarboxylates to 4-methyl-2 oxopentanoate.</text>
</comment>
<comment type="catalytic activity">
    <reaction evidence="1">
        <text>(2R,3S)-3-isopropylmalate + NAD(+) = 4-methyl-2-oxopentanoate + CO2 + NADH</text>
        <dbReference type="Rhea" id="RHEA:32271"/>
        <dbReference type="ChEBI" id="CHEBI:16526"/>
        <dbReference type="ChEBI" id="CHEBI:17865"/>
        <dbReference type="ChEBI" id="CHEBI:35121"/>
        <dbReference type="ChEBI" id="CHEBI:57540"/>
        <dbReference type="ChEBI" id="CHEBI:57945"/>
        <dbReference type="EC" id="1.1.1.85"/>
    </reaction>
</comment>
<comment type="cofactor">
    <cofactor evidence="1">
        <name>Mg(2+)</name>
        <dbReference type="ChEBI" id="CHEBI:18420"/>
    </cofactor>
    <cofactor evidence="1">
        <name>Mn(2+)</name>
        <dbReference type="ChEBI" id="CHEBI:29035"/>
    </cofactor>
    <text evidence="1">Binds 1 Mg(2+) or Mn(2+) ion per subunit.</text>
</comment>
<comment type="pathway">
    <text evidence="1">Amino-acid biosynthesis; L-leucine biosynthesis; L-leucine from 3-methyl-2-oxobutanoate: step 3/4.</text>
</comment>
<comment type="subunit">
    <text evidence="1">Homodimer.</text>
</comment>
<comment type="subcellular location">
    <subcellularLocation>
        <location evidence="1">Cytoplasm</location>
    </subcellularLocation>
</comment>
<comment type="similarity">
    <text evidence="1">Belongs to the isocitrate and isopropylmalate dehydrogenases family. LeuB type 1 subfamily.</text>
</comment>
<name>LEU3_BACC1</name>
<proteinExistence type="inferred from homology"/>
<protein>
    <recommendedName>
        <fullName evidence="1">3-isopropylmalate dehydrogenase</fullName>
        <ecNumber evidence="1">1.1.1.85</ecNumber>
    </recommendedName>
    <alternativeName>
        <fullName evidence="1">3-IPM-DH</fullName>
    </alternativeName>
    <alternativeName>
        <fullName evidence="1">Beta-IPM dehydrogenase</fullName>
        <shortName evidence="1">IMDH</shortName>
    </alternativeName>
</protein>
<accession>Q73B99</accession>
<organism>
    <name type="scientific">Bacillus cereus (strain ATCC 10987 / NRS 248)</name>
    <dbReference type="NCBI Taxonomy" id="222523"/>
    <lineage>
        <taxon>Bacteria</taxon>
        <taxon>Bacillati</taxon>
        <taxon>Bacillota</taxon>
        <taxon>Bacilli</taxon>
        <taxon>Bacillales</taxon>
        <taxon>Bacillaceae</taxon>
        <taxon>Bacillus</taxon>
        <taxon>Bacillus cereus group</taxon>
    </lineage>
</organism>
<evidence type="ECO:0000255" key="1">
    <source>
        <dbReference type="HAMAP-Rule" id="MF_01033"/>
    </source>
</evidence>
<dbReference type="EC" id="1.1.1.85" evidence="1"/>
<dbReference type="EMBL" id="AE017194">
    <property type="protein sequence ID" value="AAS40450.1"/>
    <property type="molecule type" value="Genomic_DNA"/>
</dbReference>
<dbReference type="SMR" id="Q73B99"/>
<dbReference type="KEGG" id="bca:BCE_1521"/>
<dbReference type="HOGENOM" id="CLU_031953_0_3_9"/>
<dbReference type="UniPathway" id="UPA00048">
    <property type="reaction ID" value="UER00072"/>
</dbReference>
<dbReference type="Proteomes" id="UP000002527">
    <property type="component" value="Chromosome"/>
</dbReference>
<dbReference type="GO" id="GO:0005829">
    <property type="term" value="C:cytosol"/>
    <property type="evidence" value="ECO:0007669"/>
    <property type="project" value="TreeGrafter"/>
</dbReference>
<dbReference type="GO" id="GO:0003862">
    <property type="term" value="F:3-isopropylmalate dehydrogenase activity"/>
    <property type="evidence" value="ECO:0007669"/>
    <property type="project" value="UniProtKB-UniRule"/>
</dbReference>
<dbReference type="GO" id="GO:0000287">
    <property type="term" value="F:magnesium ion binding"/>
    <property type="evidence" value="ECO:0007669"/>
    <property type="project" value="InterPro"/>
</dbReference>
<dbReference type="GO" id="GO:0051287">
    <property type="term" value="F:NAD binding"/>
    <property type="evidence" value="ECO:0007669"/>
    <property type="project" value="InterPro"/>
</dbReference>
<dbReference type="GO" id="GO:0009098">
    <property type="term" value="P:L-leucine biosynthetic process"/>
    <property type="evidence" value="ECO:0007669"/>
    <property type="project" value="UniProtKB-UniRule"/>
</dbReference>
<dbReference type="FunFam" id="3.40.718.10:FF:000006">
    <property type="entry name" value="3-isopropylmalate dehydrogenase"/>
    <property type="match status" value="1"/>
</dbReference>
<dbReference type="Gene3D" id="3.40.718.10">
    <property type="entry name" value="Isopropylmalate Dehydrogenase"/>
    <property type="match status" value="1"/>
</dbReference>
<dbReference type="HAMAP" id="MF_01033">
    <property type="entry name" value="LeuB_type1"/>
    <property type="match status" value="1"/>
</dbReference>
<dbReference type="InterPro" id="IPR019818">
    <property type="entry name" value="IsoCit/isopropylmalate_DH_CS"/>
</dbReference>
<dbReference type="InterPro" id="IPR024084">
    <property type="entry name" value="IsoPropMal-DH-like_dom"/>
</dbReference>
<dbReference type="InterPro" id="IPR004429">
    <property type="entry name" value="Isopropylmalate_DH"/>
</dbReference>
<dbReference type="NCBIfam" id="TIGR00169">
    <property type="entry name" value="leuB"/>
    <property type="match status" value="1"/>
</dbReference>
<dbReference type="PANTHER" id="PTHR42979">
    <property type="entry name" value="3-ISOPROPYLMALATE DEHYDROGENASE"/>
    <property type="match status" value="1"/>
</dbReference>
<dbReference type="PANTHER" id="PTHR42979:SF1">
    <property type="entry name" value="3-ISOPROPYLMALATE DEHYDROGENASE"/>
    <property type="match status" value="1"/>
</dbReference>
<dbReference type="Pfam" id="PF00180">
    <property type="entry name" value="Iso_dh"/>
    <property type="match status" value="1"/>
</dbReference>
<dbReference type="SMART" id="SM01329">
    <property type="entry name" value="Iso_dh"/>
    <property type="match status" value="1"/>
</dbReference>
<dbReference type="SUPFAM" id="SSF53659">
    <property type="entry name" value="Isocitrate/Isopropylmalate dehydrogenase-like"/>
    <property type="match status" value="1"/>
</dbReference>
<dbReference type="PROSITE" id="PS00470">
    <property type="entry name" value="IDH_IMDH"/>
    <property type="match status" value="1"/>
</dbReference>
<reference key="1">
    <citation type="journal article" date="2004" name="Nucleic Acids Res.">
        <title>The genome sequence of Bacillus cereus ATCC 10987 reveals metabolic adaptations and a large plasmid related to Bacillus anthracis pXO1.</title>
        <authorList>
            <person name="Rasko D.A."/>
            <person name="Ravel J."/>
            <person name="Oekstad O.A."/>
            <person name="Helgason E."/>
            <person name="Cer R.Z."/>
            <person name="Jiang L."/>
            <person name="Shores K.A."/>
            <person name="Fouts D.E."/>
            <person name="Tourasse N.J."/>
            <person name="Angiuoli S.V."/>
            <person name="Kolonay J.F."/>
            <person name="Nelson W.C."/>
            <person name="Kolstoe A.-B."/>
            <person name="Fraser C.M."/>
            <person name="Read T.D."/>
        </authorList>
    </citation>
    <scope>NUCLEOTIDE SEQUENCE [LARGE SCALE GENOMIC DNA]</scope>
    <source>
        <strain>ATCC 10987 / NRS 248</strain>
    </source>
</reference>
<gene>
    <name evidence="1" type="primary">leuB</name>
    <name type="ordered locus">BCE_1521</name>
</gene>
<sequence length="354" mass="38460">MEKRIVCLAGDGVGPEVMESAKEVLHMVERLYGHHFHLQDEYFGGSAIDLNGQPLPQRTLAACLASDAVLLGAVGGPRWDSAKERPEKGLLALRKGLGVFANVRPVTVESATAHLSPLKKADEIDFVVVRELTGGIYFSYPKERTDEVATDTLTYHRHEIERIVSYAFQLASKRKKKVTSIDKANVLESSKLWRTVTEEVALRYPDVELEHILVDAAAMELIRNPGRFDVIVTENLFGDILSDEASVLAGSLGMLPSASHAEKGPSLYEPIHGSAPDIAGKNKANPIAMMRSVAMMLGQSFGLTREGCAIEEAISAVLKLGKCTADIGGTETTTSFTKAVMQEMEEQALVGRGR</sequence>